<proteinExistence type="inferred from homology"/>
<evidence type="ECO:0000255" key="1">
    <source>
        <dbReference type="HAMAP-Rule" id="MF_01147"/>
    </source>
</evidence>
<evidence type="ECO:0000256" key="2">
    <source>
        <dbReference type="SAM" id="MobiDB-lite"/>
    </source>
</evidence>
<protein>
    <recommendedName>
        <fullName evidence="1">Phosphatidylglycerol--prolipoprotein diacylglyceryl transferase</fullName>
        <ecNumber evidence="1">2.5.1.145</ecNumber>
    </recommendedName>
</protein>
<reference key="1">
    <citation type="submission" date="2006-10" db="EMBL/GenBank/DDBJ databases">
        <authorList>
            <person name="Fleischmann R.D."/>
            <person name="Dodson R.J."/>
            <person name="Haft D.H."/>
            <person name="Merkel J.S."/>
            <person name="Nelson W.C."/>
            <person name="Fraser C.M."/>
        </authorList>
    </citation>
    <scope>NUCLEOTIDE SEQUENCE [LARGE SCALE GENOMIC DNA]</scope>
    <source>
        <strain>104</strain>
    </source>
</reference>
<feature type="chain" id="PRO_1000053454" description="Phosphatidylglycerol--prolipoprotein diacylglyceryl transferase">
    <location>
        <begin position="1"/>
        <end position="440"/>
    </location>
</feature>
<feature type="transmembrane region" description="Helical" evidence="1">
    <location>
        <begin position="21"/>
        <end position="41"/>
    </location>
</feature>
<feature type="transmembrane region" description="Helical" evidence="1">
    <location>
        <begin position="53"/>
        <end position="73"/>
    </location>
</feature>
<feature type="transmembrane region" description="Helical" evidence="1">
    <location>
        <begin position="96"/>
        <end position="116"/>
    </location>
</feature>
<feature type="transmembrane region" description="Helical" evidence="1">
    <location>
        <begin position="122"/>
        <end position="142"/>
    </location>
</feature>
<feature type="transmembrane region" description="Helical" evidence="1">
    <location>
        <begin position="189"/>
        <end position="209"/>
    </location>
</feature>
<feature type="transmembrane region" description="Helical" evidence="1">
    <location>
        <begin position="256"/>
        <end position="276"/>
    </location>
</feature>
<feature type="region of interest" description="Disordered" evidence="2">
    <location>
        <begin position="280"/>
        <end position="440"/>
    </location>
</feature>
<feature type="compositionally biased region" description="Low complexity" evidence="2">
    <location>
        <begin position="299"/>
        <end position="330"/>
    </location>
</feature>
<feature type="compositionally biased region" description="Basic and acidic residues" evidence="2">
    <location>
        <begin position="332"/>
        <end position="346"/>
    </location>
</feature>
<feature type="compositionally biased region" description="Acidic residues" evidence="2">
    <location>
        <begin position="347"/>
        <end position="417"/>
    </location>
</feature>
<feature type="compositionally biased region" description="Basic and acidic residues" evidence="2">
    <location>
        <begin position="424"/>
        <end position="440"/>
    </location>
</feature>
<feature type="binding site" evidence="1">
    <location>
        <position position="144"/>
    </location>
    <ligand>
        <name>a 1,2-diacyl-sn-glycero-3-phospho-(1'-sn-glycerol)</name>
        <dbReference type="ChEBI" id="CHEBI:64716"/>
    </ligand>
</feature>
<sequence>MTKLLAYFPSPPQGVWHLGPVPIRAYALFIIAGIVAALLIGDRRWEARGGERGVIYDIALWTVPFGLVGGRLYHLATDWRTYWGPGGAGFGAAVRIWDGGLGIWGAVALGAVGAWIGCRRHGIPLPAFADALAPGIILAQAIGRLGNYFNQELYGRETTLPWGLEIFYRRDPSGYIDPHSLDGVSTGQVALVVQPTFLYELLWNLLIFVALLYADRRLTLGHGRLFALYVAGYCVGRFCVELLRDDTATHIAGIRINSFTSTFVFIGAVVYLMAAPKGREDPESLRGNQYVEEEPAEPEPATVAATTEAATEGVAAPADGAEAAGADATAQRPEESAEPDVEKPESEETEAEAAEEPESEETEAAEEPGEPEAEEPEEPEAEEPEEPETEEPEADSDEEPEEESGEAPEQPVAEEPEPAPQQPETKRRWGARLRDRLSGR</sequence>
<organism>
    <name type="scientific">Mycobacterium avium (strain 104)</name>
    <dbReference type="NCBI Taxonomy" id="243243"/>
    <lineage>
        <taxon>Bacteria</taxon>
        <taxon>Bacillati</taxon>
        <taxon>Actinomycetota</taxon>
        <taxon>Actinomycetes</taxon>
        <taxon>Mycobacteriales</taxon>
        <taxon>Mycobacteriaceae</taxon>
        <taxon>Mycobacterium</taxon>
        <taxon>Mycobacterium avium complex (MAC)</taxon>
    </lineage>
</organism>
<gene>
    <name evidence="1" type="primary">lgt</name>
    <name type="ordered locus">MAV_3172</name>
</gene>
<name>LGT_MYCA1</name>
<dbReference type="EC" id="2.5.1.145" evidence="1"/>
<dbReference type="EMBL" id="CP000479">
    <property type="protein sequence ID" value="ABK68221.1"/>
    <property type="molecule type" value="Genomic_DNA"/>
</dbReference>
<dbReference type="RefSeq" id="WP_011725304.1">
    <property type="nucleotide sequence ID" value="NC_008595.1"/>
</dbReference>
<dbReference type="SMR" id="A0QHG7"/>
<dbReference type="KEGG" id="mav:MAV_3172"/>
<dbReference type="HOGENOM" id="CLU_013386_2_1_11"/>
<dbReference type="UniPathway" id="UPA00664"/>
<dbReference type="Proteomes" id="UP000001574">
    <property type="component" value="Chromosome"/>
</dbReference>
<dbReference type="GO" id="GO:0005886">
    <property type="term" value="C:plasma membrane"/>
    <property type="evidence" value="ECO:0007669"/>
    <property type="project" value="UniProtKB-SubCell"/>
</dbReference>
<dbReference type="GO" id="GO:0008961">
    <property type="term" value="F:phosphatidylglycerol-prolipoprotein diacylglyceryl transferase activity"/>
    <property type="evidence" value="ECO:0007669"/>
    <property type="project" value="UniProtKB-UniRule"/>
</dbReference>
<dbReference type="GO" id="GO:0042158">
    <property type="term" value="P:lipoprotein biosynthetic process"/>
    <property type="evidence" value="ECO:0007669"/>
    <property type="project" value="UniProtKB-UniRule"/>
</dbReference>
<dbReference type="HAMAP" id="MF_01147">
    <property type="entry name" value="Lgt"/>
    <property type="match status" value="1"/>
</dbReference>
<dbReference type="InterPro" id="IPR001640">
    <property type="entry name" value="Lgt"/>
</dbReference>
<dbReference type="NCBIfam" id="TIGR00544">
    <property type="entry name" value="lgt"/>
    <property type="match status" value="1"/>
</dbReference>
<dbReference type="NCBIfam" id="NF009611">
    <property type="entry name" value="PRK13108.1"/>
    <property type="match status" value="1"/>
</dbReference>
<dbReference type="PANTHER" id="PTHR30589:SF0">
    <property type="entry name" value="PHOSPHATIDYLGLYCEROL--PROLIPOPROTEIN DIACYLGLYCERYL TRANSFERASE"/>
    <property type="match status" value="1"/>
</dbReference>
<dbReference type="PANTHER" id="PTHR30589">
    <property type="entry name" value="PROLIPOPROTEIN DIACYLGLYCERYL TRANSFERASE"/>
    <property type="match status" value="1"/>
</dbReference>
<dbReference type="Pfam" id="PF01790">
    <property type="entry name" value="LGT"/>
    <property type="match status" value="1"/>
</dbReference>
<dbReference type="PROSITE" id="PS01311">
    <property type="entry name" value="LGT"/>
    <property type="match status" value="1"/>
</dbReference>
<keyword id="KW-1003">Cell membrane</keyword>
<keyword id="KW-0472">Membrane</keyword>
<keyword id="KW-0808">Transferase</keyword>
<keyword id="KW-0812">Transmembrane</keyword>
<keyword id="KW-1133">Transmembrane helix</keyword>
<comment type="function">
    <text evidence="1">Catalyzes the transfer of the diacylglyceryl group from phosphatidylglycerol to the sulfhydryl group of the N-terminal cysteine of a prolipoprotein, the first step in the formation of mature lipoproteins.</text>
</comment>
<comment type="catalytic activity">
    <reaction evidence="1">
        <text>L-cysteinyl-[prolipoprotein] + a 1,2-diacyl-sn-glycero-3-phospho-(1'-sn-glycerol) = an S-1,2-diacyl-sn-glyceryl-L-cysteinyl-[prolipoprotein] + sn-glycerol 1-phosphate + H(+)</text>
        <dbReference type="Rhea" id="RHEA:56712"/>
        <dbReference type="Rhea" id="RHEA-COMP:14679"/>
        <dbReference type="Rhea" id="RHEA-COMP:14680"/>
        <dbReference type="ChEBI" id="CHEBI:15378"/>
        <dbReference type="ChEBI" id="CHEBI:29950"/>
        <dbReference type="ChEBI" id="CHEBI:57685"/>
        <dbReference type="ChEBI" id="CHEBI:64716"/>
        <dbReference type="ChEBI" id="CHEBI:140658"/>
        <dbReference type="EC" id="2.5.1.145"/>
    </reaction>
</comment>
<comment type="pathway">
    <text evidence="1">Protein modification; lipoprotein biosynthesis (diacylglyceryl transfer).</text>
</comment>
<comment type="subcellular location">
    <subcellularLocation>
        <location evidence="1">Cell membrane</location>
        <topology evidence="1">Multi-pass membrane protein</topology>
    </subcellularLocation>
</comment>
<comment type="similarity">
    <text evidence="1">Belongs to the Lgt family.</text>
</comment>
<accession>A0QHG7</accession>